<protein>
    <recommendedName>
        <fullName evidence="5">Small ribosomal subunit protein eS24A</fullName>
    </recommendedName>
    <alternativeName>
        <fullName>40S ribosomal protein S24-A</fullName>
    </alternativeName>
</protein>
<name>RS24A_SCHPO</name>
<evidence type="ECO:0000250" key="1"/>
<evidence type="ECO:0000250" key="2">
    <source>
        <dbReference type="UniProtKB" id="P0CX31"/>
    </source>
</evidence>
<evidence type="ECO:0000256" key="3">
    <source>
        <dbReference type="SAM" id="MobiDB-lite"/>
    </source>
</evidence>
<evidence type="ECO:0000269" key="4">
    <source>
    </source>
</evidence>
<evidence type="ECO:0000305" key="5"/>
<proteinExistence type="evidence at protein level"/>
<feature type="initiator methionine" description="Removed" evidence="1">
    <location>
        <position position="1"/>
    </location>
</feature>
<feature type="chain" id="PRO_0000137634" description="Small ribosomal subunit protein eS24A">
    <location>
        <begin position="2"/>
        <end position="134"/>
    </location>
</feature>
<feature type="region of interest" description="Disordered" evidence="3">
    <location>
        <begin position="100"/>
        <end position="134"/>
    </location>
</feature>
<feature type="compositionally biased region" description="Basic residues" evidence="3">
    <location>
        <begin position="105"/>
        <end position="117"/>
    </location>
</feature>
<feature type="compositionally biased region" description="Basic residues" evidence="3">
    <location>
        <begin position="124"/>
        <end position="134"/>
    </location>
</feature>
<feature type="modified residue" description="N-acetylserine" evidence="1">
    <location>
        <position position="2"/>
    </location>
</feature>
<comment type="function">
    <text evidence="2">Component of the ribosome, a large ribonucleoprotein complex responsible for the synthesis of proteins in the cell. The small ribosomal subunit (SSU) binds messenger RNAs (mRNAs) and translates the encoded message by selecting cognate aminoacyl-transfer RNA (tRNA) molecules. The large subunit (LSU) contains the ribosomal catalytic site termed the peptidyl transferase center (PTC), which catalyzes the formation of peptide bonds, thereby polymerizing the amino acids delivered by tRNAs into a polypeptide chain. The nascent polypeptides leave the ribosome through a tunnel in the LSU and interact with protein factors that function in enzymatic processing, targeting, and the membrane insertion of nascent chains at the exit of the ribosomal tunnel.</text>
</comment>
<comment type="subunit">
    <text evidence="2">Component of the small ribosomal subunit (SSU). Mature yeast ribosomes consist of a small (40S) and a large (60S) subunit. The 40S small subunit contains 1 molecule of ribosomal RNA (18S rRNA) and at least 33 different proteins. The large 60S subunit contains 3 rRNA molecules (25S, 5.8S and 5S rRNA) and at least 46 different proteins.</text>
</comment>
<comment type="subcellular location">
    <subcellularLocation>
        <location evidence="4">Cytoplasm</location>
    </subcellularLocation>
</comment>
<comment type="miscellaneous">
    <text>There are 2 genes for eS24 in S.pombe.</text>
</comment>
<comment type="similarity">
    <text evidence="5">Belongs to the eukaryotic ribosomal protein eS24 family.</text>
</comment>
<sequence>MSEAVTIRTRKFMTNRLLQRKQMVVDILHPGKANISKNDLREKLGQMYKTDASAVQAFGLRTHYGGGRTTGFALIYDDVEAMKKFEPHYRLVRVGHAEPIQKVARQQRKQRKNRGKKVFGTGKRLAKRKSKQQD</sequence>
<accession>O13784</accession>
<reference key="1">
    <citation type="journal article" date="2002" name="Nature">
        <title>The genome sequence of Schizosaccharomyces pombe.</title>
        <authorList>
            <person name="Wood V."/>
            <person name="Gwilliam R."/>
            <person name="Rajandream M.A."/>
            <person name="Lyne M.H."/>
            <person name="Lyne R."/>
            <person name="Stewart A."/>
            <person name="Sgouros J.G."/>
            <person name="Peat N."/>
            <person name="Hayles J."/>
            <person name="Baker S.G."/>
            <person name="Basham D."/>
            <person name="Bowman S."/>
            <person name="Brooks K."/>
            <person name="Brown D."/>
            <person name="Brown S."/>
            <person name="Chillingworth T."/>
            <person name="Churcher C.M."/>
            <person name="Collins M."/>
            <person name="Connor R."/>
            <person name="Cronin A."/>
            <person name="Davis P."/>
            <person name="Feltwell T."/>
            <person name="Fraser A."/>
            <person name="Gentles S."/>
            <person name="Goble A."/>
            <person name="Hamlin N."/>
            <person name="Harris D.E."/>
            <person name="Hidalgo J."/>
            <person name="Hodgson G."/>
            <person name="Holroyd S."/>
            <person name="Hornsby T."/>
            <person name="Howarth S."/>
            <person name="Huckle E.J."/>
            <person name="Hunt S."/>
            <person name="Jagels K."/>
            <person name="James K.D."/>
            <person name="Jones L."/>
            <person name="Jones M."/>
            <person name="Leather S."/>
            <person name="McDonald S."/>
            <person name="McLean J."/>
            <person name="Mooney P."/>
            <person name="Moule S."/>
            <person name="Mungall K.L."/>
            <person name="Murphy L.D."/>
            <person name="Niblett D."/>
            <person name="Odell C."/>
            <person name="Oliver K."/>
            <person name="O'Neil S."/>
            <person name="Pearson D."/>
            <person name="Quail M.A."/>
            <person name="Rabbinowitsch E."/>
            <person name="Rutherford K.M."/>
            <person name="Rutter S."/>
            <person name="Saunders D."/>
            <person name="Seeger K."/>
            <person name="Sharp S."/>
            <person name="Skelton J."/>
            <person name="Simmonds M.N."/>
            <person name="Squares R."/>
            <person name="Squares S."/>
            <person name="Stevens K."/>
            <person name="Taylor K."/>
            <person name="Taylor R.G."/>
            <person name="Tivey A."/>
            <person name="Walsh S.V."/>
            <person name="Warren T."/>
            <person name="Whitehead S."/>
            <person name="Woodward J.R."/>
            <person name="Volckaert G."/>
            <person name="Aert R."/>
            <person name="Robben J."/>
            <person name="Grymonprez B."/>
            <person name="Weltjens I."/>
            <person name="Vanstreels E."/>
            <person name="Rieger M."/>
            <person name="Schaefer M."/>
            <person name="Mueller-Auer S."/>
            <person name="Gabel C."/>
            <person name="Fuchs M."/>
            <person name="Duesterhoeft A."/>
            <person name="Fritzc C."/>
            <person name="Holzer E."/>
            <person name="Moestl D."/>
            <person name="Hilbert H."/>
            <person name="Borzym K."/>
            <person name="Langer I."/>
            <person name="Beck A."/>
            <person name="Lehrach H."/>
            <person name="Reinhardt R."/>
            <person name="Pohl T.M."/>
            <person name="Eger P."/>
            <person name="Zimmermann W."/>
            <person name="Wedler H."/>
            <person name="Wambutt R."/>
            <person name="Purnelle B."/>
            <person name="Goffeau A."/>
            <person name="Cadieu E."/>
            <person name="Dreano S."/>
            <person name="Gloux S."/>
            <person name="Lelaure V."/>
            <person name="Mottier S."/>
            <person name="Galibert F."/>
            <person name="Aves S.J."/>
            <person name="Xiang Z."/>
            <person name="Hunt C."/>
            <person name="Moore K."/>
            <person name="Hurst S.M."/>
            <person name="Lucas M."/>
            <person name="Rochet M."/>
            <person name="Gaillardin C."/>
            <person name="Tallada V.A."/>
            <person name="Garzon A."/>
            <person name="Thode G."/>
            <person name="Daga R.R."/>
            <person name="Cruzado L."/>
            <person name="Jimenez J."/>
            <person name="Sanchez M."/>
            <person name="del Rey F."/>
            <person name="Benito J."/>
            <person name="Dominguez A."/>
            <person name="Revuelta J.L."/>
            <person name="Moreno S."/>
            <person name="Armstrong J."/>
            <person name="Forsburg S.L."/>
            <person name="Cerutti L."/>
            <person name="Lowe T."/>
            <person name="McCombie W.R."/>
            <person name="Paulsen I."/>
            <person name="Potashkin J."/>
            <person name="Shpakovski G.V."/>
            <person name="Ussery D."/>
            <person name="Barrell B.G."/>
            <person name="Nurse P."/>
        </authorList>
    </citation>
    <scope>NUCLEOTIDE SEQUENCE [LARGE SCALE GENOMIC DNA]</scope>
    <source>
        <strain>972 / ATCC 24843</strain>
    </source>
</reference>
<reference key="2">
    <citation type="journal article" date="2006" name="Nat. Biotechnol.">
        <title>ORFeome cloning and global analysis of protein localization in the fission yeast Schizosaccharomyces pombe.</title>
        <authorList>
            <person name="Matsuyama A."/>
            <person name="Arai R."/>
            <person name="Yashiroda Y."/>
            <person name="Shirai A."/>
            <person name="Kamata A."/>
            <person name="Sekido S."/>
            <person name="Kobayashi Y."/>
            <person name="Hashimoto A."/>
            <person name="Hamamoto M."/>
            <person name="Hiraoka Y."/>
            <person name="Horinouchi S."/>
            <person name="Yoshida M."/>
        </authorList>
    </citation>
    <scope>SUBCELLULAR LOCATION [LARGE SCALE ANALYSIS]</scope>
</reference>
<gene>
    <name type="primary">rps2401</name>
    <name type="synonym">rps24a</name>
    <name type="ORF">SPAC17G6.06</name>
</gene>
<keyword id="KW-0002">3D-structure</keyword>
<keyword id="KW-0007">Acetylation</keyword>
<keyword id="KW-0963">Cytoplasm</keyword>
<keyword id="KW-1185">Reference proteome</keyword>
<keyword id="KW-0687">Ribonucleoprotein</keyword>
<keyword id="KW-0689">Ribosomal protein</keyword>
<dbReference type="EMBL" id="CU329670">
    <property type="protein sequence ID" value="CAB16217.1"/>
    <property type="molecule type" value="Genomic_DNA"/>
</dbReference>
<dbReference type="PIR" id="T37838">
    <property type="entry name" value="T37838"/>
</dbReference>
<dbReference type="RefSeq" id="NP_594253.1">
    <property type="nucleotide sequence ID" value="NM_001019676.2"/>
</dbReference>
<dbReference type="PDB" id="9AXT">
    <property type="method" value="EM"/>
    <property type="resolution" value="2.40 A"/>
    <property type="chains" value="Ae=1-134"/>
</dbReference>
<dbReference type="PDB" id="9AXV">
    <property type="method" value="EM"/>
    <property type="resolution" value="2.40 A"/>
    <property type="chains" value="Ae=1-134"/>
</dbReference>
<dbReference type="PDBsum" id="9AXT"/>
<dbReference type="PDBsum" id="9AXV"/>
<dbReference type="EMDB" id="EMD-43972"/>
<dbReference type="EMDB" id="EMD-43976"/>
<dbReference type="SMR" id="O13784"/>
<dbReference type="BioGRID" id="278892">
    <property type="interactions" value="17"/>
</dbReference>
<dbReference type="FunCoup" id="O13784">
    <property type="interactions" value="583"/>
</dbReference>
<dbReference type="IntAct" id="O13784">
    <property type="interactions" value="1"/>
</dbReference>
<dbReference type="STRING" id="284812.O13784"/>
<dbReference type="iPTMnet" id="O13784"/>
<dbReference type="PaxDb" id="4896-SPAC17G6.06.1"/>
<dbReference type="EnsemblFungi" id="SPAC17G6.06.1">
    <property type="protein sequence ID" value="SPAC17G6.06.1:pep"/>
    <property type="gene ID" value="SPAC17G6.06"/>
</dbReference>
<dbReference type="GeneID" id="2542430"/>
<dbReference type="KEGG" id="spo:2542430"/>
<dbReference type="PomBase" id="SPAC17G6.06">
    <property type="gene designation" value="rps2401"/>
</dbReference>
<dbReference type="VEuPathDB" id="FungiDB:SPAC17G6.06"/>
<dbReference type="eggNOG" id="KOG3424">
    <property type="taxonomic scope" value="Eukaryota"/>
</dbReference>
<dbReference type="HOGENOM" id="CLU_107248_1_0_1"/>
<dbReference type="InParanoid" id="O13784"/>
<dbReference type="OMA" id="RKPRERC"/>
<dbReference type="PhylomeDB" id="O13784"/>
<dbReference type="Reactome" id="R-SPO-156827">
    <property type="pathway name" value="L13a-mediated translational silencing of Ceruloplasmin expression"/>
</dbReference>
<dbReference type="Reactome" id="R-SPO-1799339">
    <property type="pathway name" value="SRP-dependent cotranslational protein targeting to membrane"/>
</dbReference>
<dbReference type="Reactome" id="R-SPO-72649">
    <property type="pathway name" value="Translation initiation complex formation"/>
</dbReference>
<dbReference type="Reactome" id="R-SPO-72689">
    <property type="pathway name" value="Formation of a pool of free 40S subunits"/>
</dbReference>
<dbReference type="Reactome" id="R-SPO-72695">
    <property type="pathway name" value="Formation of the ternary complex, and subsequently, the 43S complex"/>
</dbReference>
<dbReference type="Reactome" id="R-SPO-72702">
    <property type="pathway name" value="Ribosomal scanning and start codon recognition"/>
</dbReference>
<dbReference type="Reactome" id="R-SPO-72706">
    <property type="pathway name" value="GTP hydrolysis and joining of the 60S ribosomal subunit"/>
</dbReference>
<dbReference type="Reactome" id="R-SPO-975956">
    <property type="pathway name" value="Nonsense Mediated Decay (NMD) independent of the Exon Junction Complex (EJC)"/>
</dbReference>
<dbReference type="Reactome" id="R-SPO-975957">
    <property type="pathway name" value="Nonsense Mediated Decay (NMD) enhanced by the Exon Junction Complex (EJC)"/>
</dbReference>
<dbReference type="PRO" id="PR:O13784"/>
<dbReference type="Proteomes" id="UP000002485">
    <property type="component" value="Chromosome I"/>
</dbReference>
<dbReference type="GO" id="GO:0005829">
    <property type="term" value="C:cytosol"/>
    <property type="evidence" value="ECO:0007005"/>
    <property type="project" value="PomBase"/>
</dbReference>
<dbReference type="GO" id="GO:0022627">
    <property type="term" value="C:cytosolic small ribosomal subunit"/>
    <property type="evidence" value="ECO:0000269"/>
    <property type="project" value="PomBase"/>
</dbReference>
<dbReference type="GO" id="GO:0003735">
    <property type="term" value="F:structural constituent of ribosome"/>
    <property type="evidence" value="ECO:0000266"/>
    <property type="project" value="PomBase"/>
</dbReference>
<dbReference type="GO" id="GO:0002182">
    <property type="term" value="P:cytoplasmic translational elongation"/>
    <property type="evidence" value="ECO:0000303"/>
    <property type="project" value="PomBase"/>
</dbReference>
<dbReference type="GO" id="GO:0006364">
    <property type="term" value="P:rRNA processing"/>
    <property type="evidence" value="ECO:0000266"/>
    <property type="project" value="PomBase"/>
</dbReference>
<dbReference type="FunFam" id="3.30.70.3370:FF:000001">
    <property type="entry name" value="40S ribosomal protein S24"/>
    <property type="match status" value="1"/>
</dbReference>
<dbReference type="Gene3D" id="3.30.70.3370">
    <property type="match status" value="1"/>
</dbReference>
<dbReference type="HAMAP" id="MF_00545">
    <property type="entry name" value="Ribosomal_eS24"/>
    <property type="match status" value="1"/>
</dbReference>
<dbReference type="InterPro" id="IPR053709">
    <property type="entry name" value="eRP_eS24_sf"/>
</dbReference>
<dbReference type="InterPro" id="IPR001976">
    <property type="entry name" value="Ribosomal_eS24"/>
</dbReference>
<dbReference type="InterPro" id="IPR018098">
    <property type="entry name" value="Ribosomal_eS24_CS"/>
</dbReference>
<dbReference type="InterPro" id="IPR012678">
    <property type="entry name" value="Ribosomal_uL23/eL15/eS24_sf"/>
</dbReference>
<dbReference type="PANTHER" id="PTHR10496">
    <property type="entry name" value="40S RIBOSOMAL PROTEIN S24"/>
    <property type="match status" value="1"/>
</dbReference>
<dbReference type="Pfam" id="PF01282">
    <property type="entry name" value="Ribosomal_S24e"/>
    <property type="match status" value="1"/>
</dbReference>
<dbReference type="SUPFAM" id="SSF54189">
    <property type="entry name" value="Ribosomal proteins S24e, L23 and L15e"/>
    <property type="match status" value="1"/>
</dbReference>
<dbReference type="PROSITE" id="PS00529">
    <property type="entry name" value="RIBOSOMAL_S24E"/>
    <property type="match status" value="1"/>
</dbReference>
<organism>
    <name type="scientific">Schizosaccharomyces pombe (strain 972 / ATCC 24843)</name>
    <name type="common">Fission yeast</name>
    <dbReference type="NCBI Taxonomy" id="284812"/>
    <lineage>
        <taxon>Eukaryota</taxon>
        <taxon>Fungi</taxon>
        <taxon>Dikarya</taxon>
        <taxon>Ascomycota</taxon>
        <taxon>Taphrinomycotina</taxon>
        <taxon>Schizosaccharomycetes</taxon>
        <taxon>Schizosaccharomycetales</taxon>
        <taxon>Schizosaccharomycetaceae</taxon>
        <taxon>Schizosaccharomyces</taxon>
    </lineage>
</organism>